<sequence>MLRLGASVGVHQGSRILFSDFADGGQMWTGNGPREYRLDVTFPEPFTRTPAVTVGLSMWDMDHKTNSRMDIGAENITPQGFQIVFKTWGDTRIARVRADWLAIGSVRDDEDWEIE</sequence>
<organism>
    <name type="scientific">Fuscovulum blasticum</name>
    <name type="common">Rhodobacter blasticus</name>
    <name type="synonym">Rhodopseudomonas blastica</name>
    <dbReference type="NCBI Taxonomy" id="1075"/>
    <lineage>
        <taxon>Bacteria</taxon>
        <taxon>Pseudomonadati</taxon>
        <taxon>Pseudomonadota</taxon>
        <taxon>Alphaproteobacteria</taxon>
        <taxon>Rhodobacterales</taxon>
        <taxon>Paracoccaceae</taxon>
        <taxon>Pseudogemmobacter</taxon>
    </lineage>
</organism>
<proteinExistence type="predicted"/>
<dbReference type="EMBL" id="Z00018">
    <property type="protein sequence ID" value="CAA77305.1"/>
    <property type="molecule type" value="Genomic_DNA"/>
</dbReference>
<dbReference type="PIR" id="S04677">
    <property type="entry name" value="S04677"/>
</dbReference>
<dbReference type="SMR" id="P05450"/>
<dbReference type="GO" id="GO:0009986">
    <property type="term" value="C:cell surface"/>
    <property type="evidence" value="ECO:0007669"/>
    <property type="project" value="TreeGrafter"/>
</dbReference>
<dbReference type="GO" id="GO:0045335">
    <property type="term" value="C:phagocytic vesicle"/>
    <property type="evidence" value="ECO:0007669"/>
    <property type="project" value="TreeGrafter"/>
</dbReference>
<dbReference type="GO" id="GO:0098636">
    <property type="term" value="C:protein complex involved in cell adhesion"/>
    <property type="evidence" value="ECO:0007669"/>
    <property type="project" value="TreeGrafter"/>
</dbReference>
<dbReference type="GO" id="GO:0046871">
    <property type="term" value="F:N-acetylgalactosamine binding"/>
    <property type="evidence" value="ECO:0007669"/>
    <property type="project" value="TreeGrafter"/>
</dbReference>
<dbReference type="GO" id="GO:0070492">
    <property type="term" value="F:oligosaccharide binding"/>
    <property type="evidence" value="ECO:0007669"/>
    <property type="project" value="TreeGrafter"/>
</dbReference>
<dbReference type="GO" id="GO:0030247">
    <property type="term" value="F:polysaccharide binding"/>
    <property type="evidence" value="ECO:0007669"/>
    <property type="project" value="TreeGrafter"/>
</dbReference>
<dbReference type="GO" id="GO:0098609">
    <property type="term" value="P:cell-cell adhesion"/>
    <property type="evidence" value="ECO:0007669"/>
    <property type="project" value="TreeGrafter"/>
</dbReference>
<dbReference type="Gene3D" id="2.60.40.2080">
    <property type="match status" value="1"/>
</dbReference>
<dbReference type="InterPro" id="IPR052487">
    <property type="entry name" value="Galactose-binding_lectin"/>
</dbReference>
<dbReference type="InterPro" id="IPR037221">
    <property type="entry name" value="H-type_lectin_dom_sf"/>
</dbReference>
<dbReference type="InterPro" id="IPR019019">
    <property type="entry name" value="H-type_lectin_domain"/>
</dbReference>
<dbReference type="PANTHER" id="PTHR46938">
    <property type="entry name" value="DISCOIDIN-1 SUBUNIT A-RELATED-RELATED"/>
    <property type="match status" value="1"/>
</dbReference>
<dbReference type="Pfam" id="PF09458">
    <property type="entry name" value="H_lectin"/>
    <property type="match status" value="1"/>
</dbReference>
<dbReference type="SUPFAM" id="SSF141086">
    <property type="entry name" value="Agglutinin HPA-like"/>
    <property type="match status" value="1"/>
</dbReference>
<name>YAT7_FUSBL</name>
<feature type="chain" id="PRO_0000066137" description="ATP synthase subunits region ORF 7">
    <location>
        <begin position="1"/>
        <end position="115"/>
    </location>
</feature>
<accession>P05450</accession>
<reference key="1">
    <citation type="journal article" date="1984" name="J. Mol. Biol.">
        <title>Rhodopseudomonas blastica atp operon. Nucleotide sequence and transcription.</title>
        <authorList>
            <person name="Tybulewicz V.L.J."/>
            <person name="Falk G."/>
            <person name="Walker J.E."/>
        </authorList>
    </citation>
    <scope>NUCLEOTIDE SEQUENCE [GENOMIC DNA]</scope>
</reference>
<protein>
    <recommendedName>
        <fullName>ATP synthase subunits region ORF 7</fullName>
    </recommendedName>
</protein>